<proteinExistence type="evidence at protein level"/>
<accession>Q72JV2</accession>
<reference key="1">
    <citation type="journal article" date="2004" name="Nat. Biotechnol.">
        <title>The genome sequence of the extreme thermophile Thermus thermophilus.</title>
        <authorList>
            <person name="Henne A."/>
            <person name="Brueggemann H."/>
            <person name="Raasch C."/>
            <person name="Wiezer A."/>
            <person name="Hartsch T."/>
            <person name="Liesegang H."/>
            <person name="Johann A."/>
            <person name="Lienard T."/>
            <person name="Gohl O."/>
            <person name="Martinez-Arias R."/>
            <person name="Jacobi C."/>
            <person name="Starkuviene V."/>
            <person name="Schlenczeck S."/>
            <person name="Dencker S."/>
            <person name="Huber R."/>
            <person name="Klenk H.-P."/>
            <person name="Kramer W."/>
            <person name="Merkl R."/>
            <person name="Gottschalk G."/>
            <person name="Fritz H.-J."/>
        </authorList>
    </citation>
    <scope>NUCLEOTIDE SEQUENCE [LARGE SCALE GENOMIC DNA]</scope>
    <source>
        <strain>ATCC BAA-163 / DSM 7039 / HB27</strain>
    </source>
</reference>
<reference key="2">
    <citation type="journal article" date="2016" name="FEBS Lett.">
        <title>Identification of a rhodanese-like protein involved in thiouridine biosynthesis in Thermus thermophilus tRNA.</title>
        <authorList>
            <person name="Shigi N."/>
            <person name="Asai S.I."/>
            <person name="Watanabe K."/>
        </authorList>
    </citation>
    <scope>FUNCTION</scope>
    <scope>DISRUPTION PHENOTYPE</scope>
    <scope>PATHWAY</scope>
    <scope>MUTAGENESIS OF CYS-240</scope>
    <scope>SULFHYDRATION AT CYS-240</scope>
    <source>
        <strain>ATCC BAA-163 / DSM 7039 / HB27</strain>
    </source>
</reference>
<gene>
    <name evidence="3" type="primary">ttuD</name>
    <name evidence="4" type="ordered locus">TT_C0666</name>
</gene>
<comment type="function">
    <text evidence="2">Required for the efficient 2-thiolation of 5-methyluridine residue at position 54 in the T loop of tRNAs, leading to 5-methyl-2-thiouridine (m(5)s(2)U or s(2)T). TtuD is a sulfur carrier protein that has a role to direct sulfur flow from cysteine desulfurases to m(5)s(2)U synthesis in vivo. It enhances the cysteine desulfurase activity of IscS and SufS, as well as the formation of thiocarboxylated TtuB (TtuB-COSH) in the presence of these desulfurases.</text>
</comment>
<comment type="pathway">
    <text evidence="2">tRNA modification.</text>
</comment>
<comment type="PTM">
    <text evidence="2">Cys-240 can accept a sulfur atom as persulfide forms from cysteine desulfurases IscS and SufS.</text>
</comment>
<comment type="disruption phenotype">
    <text evidence="2">Cells lacking this gene have a m(5)s(2)U content in tRNA that is about 40% of that of the wild-type strain. Moreover, TtuB-conjugates in the deletion mutant strain are similar to those in the wild-type strain, suggesting that TtuD is not involved in TtuB-conjugate formation.</text>
</comment>
<feature type="chain" id="PRO_0000442740" description="Sulfur carrier protein TtuD">
    <location>
        <begin position="1"/>
        <end position="285"/>
    </location>
</feature>
<feature type="domain" description="Rhodanese 1" evidence="1">
    <location>
        <begin position="20"/>
        <end position="127"/>
    </location>
</feature>
<feature type="domain" description="Rhodanese 2" evidence="1">
    <location>
        <begin position="161"/>
        <end position="281"/>
    </location>
</feature>
<feature type="modified residue" description="Cysteine persulfide" evidence="2">
    <location>
        <position position="240"/>
    </location>
</feature>
<feature type="mutagenesis site" description="Loss of persulfidation." evidence="2">
    <original>C</original>
    <variation>S</variation>
    <location>
        <position position="240"/>
    </location>
</feature>
<sequence>MGYAHPEVLVSTDWVQEHLEDPKVRVLEVDEDILLYDTGHIPGAQKIDWQRDFWDPVVRDFISEEEFAKLMERLGISNDTTVVLYGDKNNWWAAYAFWFFKYNGHKDVRLMNGGRQKWVEEGRPLTTEVPSYPPGRYEVPYRDESIRAYRDDVLEHIIKVKEGKGALVDVRSPQEYRGELTHMPDYPQEGALRAGHIPGAKNIPWAKAVNPDGTFKSAEELRALYEPLGITKDKDIVVYCRIAERSSHSWFVLKYLLGYPHVKNYDGSWTEWGNLVGVPIAKGEE</sequence>
<protein>
    <recommendedName>
        <fullName evidence="3">Sulfur carrier protein TtuD</fullName>
    </recommendedName>
    <alternativeName>
        <fullName evidence="3">Rhodanese-like protein TtuD</fullName>
    </alternativeName>
    <alternativeName>
        <fullName evidence="3">tRNA two-thiouridine-synthesizing protein D</fullName>
    </alternativeName>
</protein>
<keyword id="KW-0677">Repeat</keyword>
<keyword id="KW-0819">tRNA processing</keyword>
<evidence type="ECO:0000255" key="1">
    <source>
        <dbReference type="PROSITE-ProRule" id="PRU00173"/>
    </source>
</evidence>
<evidence type="ECO:0000269" key="2">
    <source>
    </source>
</evidence>
<evidence type="ECO:0000303" key="3">
    <source>
    </source>
</evidence>
<evidence type="ECO:0000312" key="4">
    <source>
        <dbReference type="EMBL" id="AAS81014.1"/>
    </source>
</evidence>
<name>TTUD_THET2</name>
<dbReference type="EMBL" id="AE017221">
    <property type="protein sequence ID" value="AAS81014.1"/>
    <property type="molecule type" value="Genomic_DNA"/>
</dbReference>
<dbReference type="RefSeq" id="WP_008632430.1">
    <property type="nucleotide sequence ID" value="NC_005835.1"/>
</dbReference>
<dbReference type="SMR" id="Q72JV2"/>
<dbReference type="GeneID" id="3170077"/>
<dbReference type="KEGG" id="tth:TT_C0666"/>
<dbReference type="eggNOG" id="COG2897">
    <property type="taxonomic scope" value="Bacteria"/>
</dbReference>
<dbReference type="HOGENOM" id="CLU_031618_1_3_0"/>
<dbReference type="OrthoDB" id="9770030at2"/>
<dbReference type="BioCyc" id="MetaCyc:MONOMER-20263"/>
<dbReference type="Proteomes" id="UP000000592">
    <property type="component" value="Chromosome"/>
</dbReference>
<dbReference type="GO" id="GO:0004792">
    <property type="term" value="F:thiosulfate-cyanide sulfurtransferase activity"/>
    <property type="evidence" value="ECO:0007669"/>
    <property type="project" value="InterPro"/>
</dbReference>
<dbReference type="GO" id="GO:0008033">
    <property type="term" value="P:tRNA processing"/>
    <property type="evidence" value="ECO:0007669"/>
    <property type="project" value="UniProtKB-KW"/>
</dbReference>
<dbReference type="CDD" id="cd01448">
    <property type="entry name" value="TST_Repeat_1"/>
    <property type="match status" value="1"/>
</dbReference>
<dbReference type="CDD" id="cd01449">
    <property type="entry name" value="TST_Repeat_2"/>
    <property type="match status" value="1"/>
</dbReference>
<dbReference type="Gene3D" id="3.40.250.10">
    <property type="entry name" value="Rhodanese-like domain"/>
    <property type="match status" value="2"/>
</dbReference>
<dbReference type="InterPro" id="IPR001763">
    <property type="entry name" value="Rhodanese-like_dom"/>
</dbReference>
<dbReference type="InterPro" id="IPR036873">
    <property type="entry name" value="Rhodanese-like_dom_sf"/>
</dbReference>
<dbReference type="InterPro" id="IPR051126">
    <property type="entry name" value="Thiosulfate_sulfurtransferase"/>
</dbReference>
<dbReference type="InterPro" id="IPR001307">
    <property type="entry name" value="Thiosulphate_STrfase_CS"/>
</dbReference>
<dbReference type="PANTHER" id="PTHR43855">
    <property type="entry name" value="THIOSULFATE SULFURTRANSFERASE"/>
    <property type="match status" value="1"/>
</dbReference>
<dbReference type="PANTHER" id="PTHR43855:SF1">
    <property type="entry name" value="THIOSULFATE SULFURTRANSFERASE"/>
    <property type="match status" value="1"/>
</dbReference>
<dbReference type="Pfam" id="PF00581">
    <property type="entry name" value="Rhodanese"/>
    <property type="match status" value="2"/>
</dbReference>
<dbReference type="SMART" id="SM00450">
    <property type="entry name" value="RHOD"/>
    <property type="match status" value="2"/>
</dbReference>
<dbReference type="SUPFAM" id="SSF52821">
    <property type="entry name" value="Rhodanese/Cell cycle control phosphatase"/>
    <property type="match status" value="2"/>
</dbReference>
<dbReference type="PROSITE" id="PS00380">
    <property type="entry name" value="RHODANESE_1"/>
    <property type="match status" value="1"/>
</dbReference>
<dbReference type="PROSITE" id="PS00683">
    <property type="entry name" value="RHODANESE_2"/>
    <property type="match status" value="1"/>
</dbReference>
<dbReference type="PROSITE" id="PS50206">
    <property type="entry name" value="RHODANESE_3"/>
    <property type="match status" value="2"/>
</dbReference>
<organism>
    <name type="scientific">Thermus thermophilus (strain ATCC BAA-163 / DSM 7039 / HB27)</name>
    <dbReference type="NCBI Taxonomy" id="262724"/>
    <lineage>
        <taxon>Bacteria</taxon>
        <taxon>Thermotogati</taxon>
        <taxon>Deinococcota</taxon>
        <taxon>Deinococci</taxon>
        <taxon>Thermales</taxon>
        <taxon>Thermaceae</taxon>
        <taxon>Thermus</taxon>
    </lineage>
</organism>